<gene>
    <name evidence="1" type="primary">lipB</name>
    <name type="ordered locus">Acry_2290</name>
</gene>
<dbReference type="EC" id="2.3.1.181" evidence="1"/>
<dbReference type="EMBL" id="CP000697">
    <property type="protein sequence ID" value="ABQ31485.1"/>
    <property type="molecule type" value="Genomic_DNA"/>
</dbReference>
<dbReference type="RefSeq" id="WP_012039940.1">
    <property type="nucleotide sequence ID" value="NC_009484.1"/>
</dbReference>
<dbReference type="SMR" id="A5G0V3"/>
<dbReference type="STRING" id="349163.Acry_2290"/>
<dbReference type="KEGG" id="acr:Acry_2290"/>
<dbReference type="eggNOG" id="COG0321">
    <property type="taxonomic scope" value="Bacteria"/>
</dbReference>
<dbReference type="HOGENOM" id="CLU_035168_3_0_5"/>
<dbReference type="UniPathway" id="UPA00538">
    <property type="reaction ID" value="UER00592"/>
</dbReference>
<dbReference type="Proteomes" id="UP000000245">
    <property type="component" value="Chromosome"/>
</dbReference>
<dbReference type="GO" id="GO:0005737">
    <property type="term" value="C:cytoplasm"/>
    <property type="evidence" value="ECO:0007669"/>
    <property type="project" value="UniProtKB-SubCell"/>
</dbReference>
<dbReference type="GO" id="GO:0033819">
    <property type="term" value="F:lipoyl(octanoyl) transferase activity"/>
    <property type="evidence" value="ECO:0007669"/>
    <property type="project" value="UniProtKB-EC"/>
</dbReference>
<dbReference type="GO" id="GO:0036211">
    <property type="term" value="P:protein modification process"/>
    <property type="evidence" value="ECO:0007669"/>
    <property type="project" value="InterPro"/>
</dbReference>
<dbReference type="CDD" id="cd16444">
    <property type="entry name" value="LipB"/>
    <property type="match status" value="1"/>
</dbReference>
<dbReference type="Gene3D" id="3.30.930.10">
    <property type="entry name" value="Bira Bifunctional Protein, Domain 2"/>
    <property type="match status" value="1"/>
</dbReference>
<dbReference type="HAMAP" id="MF_00013">
    <property type="entry name" value="LipB"/>
    <property type="match status" value="1"/>
</dbReference>
<dbReference type="InterPro" id="IPR045864">
    <property type="entry name" value="aa-tRNA-synth_II/BPL/LPL"/>
</dbReference>
<dbReference type="InterPro" id="IPR004143">
    <property type="entry name" value="BPL_LPL_catalytic"/>
</dbReference>
<dbReference type="InterPro" id="IPR000544">
    <property type="entry name" value="Octanoyltransferase"/>
</dbReference>
<dbReference type="InterPro" id="IPR020605">
    <property type="entry name" value="Octanoyltransferase_CS"/>
</dbReference>
<dbReference type="NCBIfam" id="TIGR00214">
    <property type="entry name" value="lipB"/>
    <property type="match status" value="1"/>
</dbReference>
<dbReference type="NCBIfam" id="NF010921">
    <property type="entry name" value="PRK14341.1"/>
    <property type="match status" value="1"/>
</dbReference>
<dbReference type="NCBIfam" id="NF010925">
    <property type="entry name" value="PRK14345.1"/>
    <property type="match status" value="1"/>
</dbReference>
<dbReference type="PANTHER" id="PTHR10993:SF7">
    <property type="entry name" value="LIPOYLTRANSFERASE 2, MITOCHONDRIAL-RELATED"/>
    <property type="match status" value="1"/>
</dbReference>
<dbReference type="PANTHER" id="PTHR10993">
    <property type="entry name" value="OCTANOYLTRANSFERASE"/>
    <property type="match status" value="1"/>
</dbReference>
<dbReference type="Pfam" id="PF21948">
    <property type="entry name" value="LplA-B_cat"/>
    <property type="match status" value="1"/>
</dbReference>
<dbReference type="PIRSF" id="PIRSF016262">
    <property type="entry name" value="LPLase"/>
    <property type="match status" value="1"/>
</dbReference>
<dbReference type="SUPFAM" id="SSF55681">
    <property type="entry name" value="Class II aaRS and biotin synthetases"/>
    <property type="match status" value="1"/>
</dbReference>
<dbReference type="PROSITE" id="PS51733">
    <property type="entry name" value="BPL_LPL_CATALYTIC"/>
    <property type="match status" value="1"/>
</dbReference>
<dbReference type="PROSITE" id="PS01313">
    <property type="entry name" value="LIPB"/>
    <property type="match status" value="1"/>
</dbReference>
<protein>
    <recommendedName>
        <fullName evidence="1">Octanoyltransferase</fullName>
        <ecNumber evidence="1">2.3.1.181</ecNumber>
    </recommendedName>
    <alternativeName>
        <fullName evidence="1">Lipoate-protein ligase B</fullName>
    </alternativeName>
    <alternativeName>
        <fullName evidence="1">Lipoyl/octanoyl transferase</fullName>
    </alternativeName>
    <alternativeName>
        <fullName evidence="1">Octanoyl-[acyl-carrier-protein]-protein N-octanoyltransferase</fullName>
    </alternativeName>
</protein>
<name>LIPB_ACICJ</name>
<proteinExistence type="inferred from homology"/>
<feature type="chain" id="PRO_0000321615" description="Octanoyltransferase">
    <location>
        <begin position="1"/>
        <end position="228"/>
    </location>
</feature>
<feature type="domain" description="BPL/LPL catalytic" evidence="2">
    <location>
        <begin position="40"/>
        <end position="225"/>
    </location>
</feature>
<feature type="active site" description="Acyl-thioester intermediate" evidence="1">
    <location>
        <position position="187"/>
    </location>
</feature>
<feature type="binding site" evidence="1">
    <location>
        <begin position="79"/>
        <end position="86"/>
    </location>
    <ligand>
        <name>substrate</name>
    </ligand>
</feature>
<feature type="binding site" evidence="1">
    <location>
        <begin position="156"/>
        <end position="158"/>
    </location>
    <ligand>
        <name>substrate</name>
    </ligand>
</feature>
<feature type="binding site" evidence="1">
    <location>
        <begin position="169"/>
        <end position="171"/>
    </location>
    <ligand>
        <name>substrate</name>
    </ligand>
</feature>
<feature type="site" description="Lowers pKa of active site Cys" evidence="1">
    <location>
        <position position="153"/>
    </location>
</feature>
<organism>
    <name type="scientific">Acidiphilium cryptum (strain JF-5)</name>
    <dbReference type="NCBI Taxonomy" id="349163"/>
    <lineage>
        <taxon>Bacteria</taxon>
        <taxon>Pseudomonadati</taxon>
        <taxon>Pseudomonadota</taxon>
        <taxon>Alphaproteobacteria</taxon>
        <taxon>Acetobacterales</taxon>
        <taxon>Acidocellaceae</taxon>
        <taxon>Acidiphilium</taxon>
    </lineage>
</organism>
<sequence length="228" mass="24113">MDRAVSTTTNAVEWAKAPGLTDYPSALAEMQARAAAIRAGEEAERVWLVEHPPLYTAGTSARDADLLHPGDAQVFRSGRGGQWTYHGPGQRVAYVMLDLSRPHGRVPARDVRGFVAGLEAWLIDTLAGFGVRGELREGRVGIWVANPLGGESKIAAIGVRVSRWVSYHGIALNVAPDLGRFGGIVPCGISEHGVTSLAALGVAATLDAVDAALARSFERVFDAAPQPV</sequence>
<keyword id="KW-0012">Acyltransferase</keyword>
<keyword id="KW-0963">Cytoplasm</keyword>
<keyword id="KW-1185">Reference proteome</keyword>
<keyword id="KW-0808">Transferase</keyword>
<comment type="function">
    <text evidence="1">Catalyzes the transfer of endogenously produced octanoic acid from octanoyl-acyl-carrier-protein onto the lipoyl domains of lipoate-dependent enzymes. Lipoyl-ACP can also act as a substrate although octanoyl-ACP is likely to be the physiological substrate.</text>
</comment>
<comment type="catalytic activity">
    <reaction evidence="1">
        <text>octanoyl-[ACP] + L-lysyl-[protein] = N(6)-octanoyl-L-lysyl-[protein] + holo-[ACP] + H(+)</text>
        <dbReference type="Rhea" id="RHEA:17665"/>
        <dbReference type="Rhea" id="RHEA-COMP:9636"/>
        <dbReference type="Rhea" id="RHEA-COMP:9685"/>
        <dbReference type="Rhea" id="RHEA-COMP:9752"/>
        <dbReference type="Rhea" id="RHEA-COMP:9928"/>
        <dbReference type="ChEBI" id="CHEBI:15378"/>
        <dbReference type="ChEBI" id="CHEBI:29969"/>
        <dbReference type="ChEBI" id="CHEBI:64479"/>
        <dbReference type="ChEBI" id="CHEBI:78463"/>
        <dbReference type="ChEBI" id="CHEBI:78809"/>
        <dbReference type="EC" id="2.3.1.181"/>
    </reaction>
</comment>
<comment type="pathway">
    <text evidence="1">Protein modification; protein lipoylation via endogenous pathway; protein N(6)-(lipoyl)lysine from octanoyl-[acyl-carrier-protein]: step 1/2.</text>
</comment>
<comment type="subcellular location">
    <subcellularLocation>
        <location evidence="1">Cytoplasm</location>
    </subcellularLocation>
</comment>
<comment type="miscellaneous">
    <text evidence="1">In the reaction, the free carboxyl group of octanoic acid is attached via an amide linkage to the epsilon-amino group of a specific lysine residue of lipoyl domains of lipoate-dependent enzymes.</text>
</comment>
<comment type="similarity">
    <text evidence="1">Belongs to the LipB family.</text>
</comment>
<accession>A5G0V3</accession>
<evidence type="ECO:0000255" key="1">
    <source>
        <dbReference type="HAMAP-Rule" id="MF_00013"/>
    </source>
</evidence>
<evidence type="ECO:0000255" key="2">
    <source>
        <dbReference type="PROSITE-ProRule" id="PRU01067"/>
    </source>
</evidence>
<reference key="1">
    <citation type="submission" date="2007-05" db="EMBL/GenBank/DDBJ databases">
        <title>Complete sequence of chromosome of Acidiphilium cryptum JF-5.</title>
        <authorList>
            <consortium name="US DOE Joint Genome Institute"/>
            <person name="Copeland A."/>
            <person name="Lucas S."/>
            <person name="Lapidus A."/>
            <person name="Barry K."/>
            <person name="Detter J.C."/>
            <person name="Glavina del Rio T."/>
            <person name="Hammon N."/>
            <person name="Israni S."/>
            <person name="Dalin E."/>
            <person name="Tice H."/>
            <person name="Pitluck S."/>
            <person name="Sims D."/>
            <person name="Brettin T."/>
            <person name="Bruce D."/>
            <person name="Han C."/>
            <person name="Schmutz J."/>
            <person name="Larimer F."/>
            <person name="Land M."/>
            <person name="Hauser L."/>
            <person name="Kyrpides N."/>
            <person name="Kim E."/>
            <person name="Magnuson T."/>
            <person name="Richardson P."/>
        </authorList>
    </citation>
    <scope>NUCLEOTIDE SEQUENCE [LARGE SCALE GENOMIC DNA]</scope>
    <source>
        <strain>JF-5</strain>
    </source>
</reference>